<evidence type="ECO:0000255" key="1">
    <source>
        <dbReference type="HAMAP-Rule" id="MF_02002"/>
    </source>
</evidence>
<proteinExistence type="inferred from homology"/>
<gene>
    <name evidence="1" type="primary">ileS</name>
    <name type="ordered locus">BAA_4060</name>
</gene>
<sequence length="921" mass="104611">MEYKNTLLMPKTEFPMRGNLPKREPAMQEKWAEMNIYETVQEHTKGRPLFVLHDGPPYANGDIHMGHALNKVLKDFIVRYKSMTGFCAPYVPGWDTHGLPIEQALTNKGVKRKEMTVAEFRKLCAEYAYEQVERQREQFKRLGVRADWDNPYITLEPAYEAQQIKVFGDMAKKGYIYKGQKPVYWSPTSESALAEAEIEYQDKKSASIYVAFSVKDGKNVLEGDEKYIIWTTTPWTLPANLGISVHPELEYAIVKVNDEKYIIASELFETVAKTLEWENAEVVKTVKGSELEYTVAKHPFYDRDSLVMLGDHVTTDAGTGCVHTAPGHGEDDFIVGKKYGLEVLCPVDDKGVLTEEAPGFEGLFYDKANKPITEKLEEVGALLKLTFITHSYPHDWRTKKPIIFRATAQWFASIEAFRKELLEAVAETKWVPAWGETRLHNMVRDRGDWCISRQRAWGVPIPVFYAENGDPIITDETINHVADLFREHGSNVWFEREAKDLLPEGFTHPGSPNGEFRKETDIMDVWFDSGSSHQAVLEERDDLQRPADLYLEGSDQYRGWFNSSLSTAVAVTGKAPYKGVLSHGFVLDGEGRKMSKSIGNIVVPKKIMDQLGGDILRLWVSSVDYQSDVRISDDILKQVAEVYRKIRNTFRFLLGNLDDFKPSENTVAVAELREVDRYMLVKLNDLITKVKEAYETYDFAAVYHAIHNFCTIDLSSFYLDFAKDILYIEGANHEDRRAIQTVLYDVLVALTKLVTPILPHTADEVWPYIPGVTEESVQLTDMPEAVQLDDAEALKTKWDAFMTLRDDVLKALEVARNEKVIGKSLNASITLYPTAEMKAMLESINEDLKQLFIVSEYKLGGMMEEAPADAPKYEHTAVVVAQATGETCERCWVVSETIGKDAEHETLCERCATVVKENYVK</sequence>
<feature type="chain" id="PRO_1000189121" description="Isoleucine--tRNA ligase">
    <location>
        <begin position="1"/>
        <end position="921"/>
    </location>
</feature>
<feature type="short sequence motif" description="'HIGH' region">
    <location>
        <begin position="57"/>
        <end position="67"/>
    </location>
</feature>
<feature type="short sequence motif" description="'KMSKS' region">
    <location>
        <begin position="593"/>
        <end position="597"/>
    </location>
</feature>
<feature type="binding site" evidence="1">
    <location>
        <position position="552"/>
    </location>
    <ligand>
        <name>L-isoleucyl-5'-AMP</name>
        <dbReference type="ChEBI" id="CHEBI:178002"/>
    </ligand>
</feature>
<feature type="binding site" evidence="1">
    <location>
        <position position="596"/>
    </location>
    <ligand>
        <name>ATP</name>
        <dbReference type="ChEBI" id="CHEBI:30616"/>
    </ligand>
</feature>
<feature type="binding site" evidence="1">
    <location>
        <position position="888"/>
    </location>
    <ligand>
        <name>Zn(2+)</name>
        <dbReference type="ChEBI" id="CHEBI:29105"/>
    </ligand>
</feature>
<feature type="binding site" evidence="1">
    <location>
        <position position="891"/>
    </location>
    <ligand>
        <name>Zn(2+)</name>
        <dbReference type="ChEBI" id="CHEBI:29105"/>
    </ligand>
</feature>
<feature type="binding site" evidence="1">
    <location>
        <position position="908"/>
    </location>
    <ligand>
        <name>Zn(2+)</name>
        <dbReference type="ChEBI" id="CHEBI:29105"/>
    </ligand>
</feature>
<feature type="binding site" evidence="1">
    <location>
        <position position="911"/>
    </location>
    <ligand>
        <name>Zn(2+)</name>
        <dbReference type="ChEBI" id="CHEBI:29105"/>
    </ligand>
</feature>
<reference key="1">
    <citation type="submission" date="2009-04" db="EMBL/GenBank/DDBJ databases">
        <title>Genome sequence of Bacillus anthracis A0248.</title>
        <authorList>
            <person name="Dodson R.J."/>
            <person name="Munk A.C."/>
            <person name="Bruce D."/>
            <person name="Detter C."/>
            <person name="Tapia R."/>
            <person name="Sutton G."/>
            <person name="Sims D."/>
            <person name="Brettin T."/>
        </authorList>
    </citation>
    <scope>NUCLEOTIDE SEQUENCE [LARGE SCALE GENOMIC DNA]</scope>
    <source>
        <strain>A0248</strain>
    </source>
</reference>
<accession>C3P665</accession>
<comment type="function">
    <text evidence="1">Catalyzes the attachment of isoleucine to tRNA(Ile). As IleRS can inadvertently accommodate and process structurally similar amino acids such as valine, to avoid such errors it has two additional distinct tRNA(Ile)-dependent editing activities. One activity is designated as 'pretransfer' editing and involves the hydrolysis of activated Val-AMP. The other activity is designated 'posttransfer' editing and involves deacylation of mischarged Val-tRNA(Ile).</text>
</comment>
<comment type="catalytic activity">
    <reaction evidence="1">
        <text>tRNA(Ile) + L-isoleucine + ATP = L-isoleucyl-tRNA(Ile) + AMP + diphosphate</text>
        <dbReference type="Rhea" id="RHEA:11060"/>
        <dbReference type="Rhea" id="RHEA-COMP:9666"/>
        <dbReference type="Rhea" id="RHEA-COMP:9695"/>
        <dbReference type="ChEBI" id="CHEBI:30616"/>
        <dbReference type="ChEBI" id="CHEBI:33019"/>
        <dbReference type="ChEBI" id="CHEBI:58045"/>
        <dbReference type="ChEBI" id="CHEBI:78442"/>
        <dbReference type="ChEBI" id="CHEBI:78528"/>
        <dbReference type="ChEBI" id="CHEBI:456215"/>
        <dbReference type="EC" id="6.1.1.5"/>
    </reaction>
</comment>
<comment type="cofactor">
    <cofactor evidence="1">
        <name>Zn(2+)</name>
        <dbReference type="ChEBI" id="CHEBI:29105"/>
    </cofactor>
    <text evidence="1">Binds 1 zinc ion per subunit.</text>
</comment>
<comment type="subunit">
    <text evidence="1">Monomer.</text>
</comment>
<comment type="subcellular location">
    <subcellularLocation>
        <location evidence="1">Cytoplasm</location>
    </subcellularLocation>
</comment>
<comment type="domain">
    <text evidence="1">IleRS has two distinct active sites: one for aminoacylation and one for editing. The misactivated valine is translocated from the active site to the editing site, which sterically excludes the correctly activated isoleucine. The single editing site contains two valyl binding pockets, one specific for each substrate (Val-AMP or Val-tRNA(Ile)).</text>
</comment>
<comment type="similarity">
    <text evidence="1">Belongs to the class-I aminoacyl-tRNA synthetase family. IleS type 1 subfamily.</text>
</comment>
<keyword id="KW-0030">Aminoacyl-tRNA synthetase</keyword>
<keyword id="KW-0067">ATP-binding</keyword>
<keyword id="KW-0963">Cytoplasm</keyword>
<keyword id="KW-0436">Ligase</keyword>
<keyword id="KW-0479">Metal-binding</keyword>
<keyword id="KW-0547">Nucleotide-binding</keyword>
<keyword id="KW-0648">Protein biosynthesis</keyword>
<keyword id="KW-0862">Zinc</keyword>
<protein>
    <recommendedName>
        <fullName evidence="1">Isoleucine--tRNA ligase</fullName>
        <ecNumber evidence="1">6.1.1.5</ecNumber>
    </recommendedName>
    <alternativeName>
        <fullName evidence="1">Isoleucyl-tRNA synthetase</fullName>
        <shortName evidence="1">IleRS</shortName>
    </alternativeName>
</protein>
<name>SYI_BACAA</name>
<dbReference type="EC" id="6.1.1.5" evidence="1"/>
<dbReference type="EMBL" id="CP001598">
    <property type="protein sequence ID" value="ACQ50315.1"/>
    <property type="molecule type" value="Genomic_DNA"/>
</dbReference>
<dbReference type="RefSeq" id="WP_000455959.1">
    <property type="nucleotide sequence ID" value="NC_012659.1"/>
</dbReference>
<dbReference type="SMR" id="C3P665"/>
<dbReference type="GeneID" id="45023724"/>
<dbReference type="KEGG" id="bai:BAA_4060"/>
<dbReference type="HOGENOM" id="CLU_001493_7_0_9"/>
<dbReference type="GO" id="GO:0005829">
    <property type="term" value="C:cytosol"/>
    <property type="evidence" value="ECO:0007669"/>
    <property type="project" value="TreeGrafter"/>
</dbReference>
<dbReference type="GO" id="GO:0002161">
    <property type="term" value="F:aminoacyl-tRNA deacylase activity"/>
    <property type="evidence" value="ECO:0007669"/>
    <property type="project" value="InterPro"/>
</dbReference>
<dbReference type="GO" id="GO:0005524">
    <property type="term" value="F:ATP binding"/>
    <property type="evidence" value="ECO:0007669"/>
    <property type="project" value="UniProtKB-UniRule"/>
</dbReference>
<dbReference type="GO" id="GO:0004822">
    <property type="term" value="F:isoleucine-tRNA ligase activity"/>
    <property type="evidence" value="ECO:0007669"/>
    <property type="project" value="UniProtKB-UniRule"/>
</dbReference>
<dbReference type="GO" id="GO:0000049">
    <property type="term" value="F:tRNA binding"/>
    <property type="evidence" value="ECO:0007669"/>
    <property type="project" value="InterPro"/>
</dbReference>
<dbReference type="GO" id="GO:0008270">
    <property type="term" value="F:zinc ion binding"/>
    <property type="evidence" value="ECO:0007669"/>
    <property type="project" value="UniProtKB-UniRule"/>
</dbReference>
<dbReference type="GO" id="GO:0006428">
    <property type="term" value="P:isoleucyl-tRNA aminoacylation"/>
    <property type="evidence" value="ECO:0007669"/>
    <property type="project" value="UniProtKB-UniRule"/>
</dbReference>
<dbReference type="CDD" id="cd07960">
    <property type="entry name" value="Anticodon_Ia_Ile_BEm"/>
    <property type="match status" value="1"/>
</dbReference>
<dbReference type="CDD" id="cd00818">
    <property type="entry name" value="IleRS_core"/>
    <property type="match status" value="1"/>
</dbReference>
<dbReference type="FunFam" id="1.10.10.830:FF:000001">
    <property type="entry name" value="Isoleucine--tRNA ligase"/>
    <property type="match status" value="1"/>
</dbReference>
<dbReference type="FunFam" id="1.10.730.20:FF:000001">
    <property type="entry name" value="Isoleucine--tRNA ligase"/>
    <property type="match status" value="1"/>
</dbReference>
<dbReference type="FunFam" id="3.40.50.620:FF:000152">
    <property type="entry name" value="Isoleucine--tRNA ligase"/>
    <property type="match status" value="1"/>
</dbReference>
<dbReference type="FunFam" id="3.90.740.10:FF:000006">
    <property type="entry name" value="Isoleucine--tRNA ligase"/>
    <property type="match status" value="1"/>
</dbReference>
<dbReference type="Gene3D" id="1.10.730.20">
    <property type="match status" value="1"/>
</dbReference>
<dbReference type="Gene3D" id="3.40.50.620">
    <property type="entry name" value="HUPs"/>
    <property type="match status" value="2"/>
</dbReference>
<dbReference type="Gene3D" id="1.10.10.830">
    <property type="entry name" value="Ile-tRNA synthetase CP2 domain-like"/>
    <property type="match status" value="1"/>
</dbReference>
<dbReference type="Gene3D" id="3.90.740.10">
    <property type="entry name" value="Valyl/Leucyl/Isoleucyl-tRNA synthetase, editing domain"/>
    <property type="match status" value="1"/>
</dbReference>
<dbReference type="HAMAP" id="MF_02002">
    <property type="entry name" value="Ile_tRNA_synth_type1"/>
    <property type="match status" value="1"/>
</dbReference>
<dbReference type="InterPro" id="IPR001412">
    <property type="entry name" value="aa-tRNA-synth_I_CS"/>
</dbReference>
<dbReference type="InterPro" id="IPR002300">
    <property type="entry name" value="aa-tRNA-synth_Ia"/>
</dbReference>
<dbReference type="InterPro" id="IPR033708">
    <property type="entry name" value="Anticodon_Ile_BEm"/>
</dbReference>
<dbReference type="InterPro" id="IPR002301">
    <property type="entry name" value="Ile-tRNA-ligase"/>
</dbReference>
<dbReference type="InterPro" id="IPR023585">
    <property type="entry name" value="Ile-tRNA-ligase_type1"/>
</dbReference>
<dbReference type="InterPro" id="IPR050081">
    <property type="entry name" value="Ile-tRNA_ligase"/>
</dbReference>
<dbReference type="InterPro" id="IPR013155">
    <property type="entry name" value="M/V/L/I-tRNA-synth_anticd-bd"/>
</dbReference>
<dbReference type="InterPro" id="IPR014729">
    <property type="entry name" value="Rossmann-like_a/b/a_fold"/>
</dbReference>
<dbReference type="InterPro" id="IPR009080">
    <property type="entry name" value="tRNAsynth_Ia_anticodon-bd"/>
</dbReference>
<dbReference type="InterPro" id="IPR009008">
    <property type="entry name" value="Val/Leu/Ile-tRNA-synth_edit"/>
</dbReference>
<dbReference type="InterPro" id="IPR010663">
    <property type="entry name" value="Znf_FPG/IleRS"/>
</dbReference>
<dbReference type="NCBIfam" id="TIGR00392">
    <property type="entry name" value="ileS"/>
    <property type="match status" value="1"/>
</dbReference>
<dbReference type="PANTHER" id="PTHR42765:SF1">
    <property type="entry name" value="ISOLEUCINE--TRNA LIGASE, MITOCHONDRIAL"/>
    <property type="match status" value="1"/>
</dbReference>
<dbReference type="PANTHER" id="PTHR42765">
    <property type="entry name" value="SOLEUCYL-TRNA SYNTHETASE"/>
    <property type="match status" value="1"/>
</dbReference>
<dbReference type="Pfam" id="PF08264">
    <property type="entry name" value="Anticodon_1"/>
    <property type="match status" value="1"/>
</dbReference>
<dbReference type="Pfam" id="PF00133">
    <property type="entry name" value="tRNA-synt_1"/>
    <property type="match status" value="1"/>
</dbReference>
<dbReference type="Pfam" id="PF06827">
    <property type="entry name" value="zf-FPG_IleRS"/>
    <property type="match status" value="1"/>
</dbReference>
<dbReference type="PRINTS" id="PR00984">
    <property type="entry name" value="TRNASYNTHILE"/>
</dbReference>
<dbReference type="SUPFAM" id="SSF47323">
    <property type="entry name" value="Anticodon-binding domain of a subclass of class I aminoacyl-tRNA synthetases"/>
    <property type="match status" value="1"/>
</dbReference>
<dbReference type="SUPFAM" id="SSF52374">
    <property type="entry name" value="Nucleotidylyl transferase"/>
    <property type="match status" value="1"/>
</dbReference>
<dbReference type="SUPFAM" id="SSF50677">
    <property type="entry name" value="ValRS/IleRS/LeuRS editing domain"/>
    <property type="match status" value="1"/>
</dbReference>
<dbReference type="PROSITE" id="PS00178">
    <property type="entry name" value="AA_TRNA_LIGASE_I"/>
    <property type="match status" value="1"/>
</dbReference>
<organism>
    <name type="scientific">Bacillus anthracis (strain A0248)</name>
    <dbReference type="NCBI Taxonomy" id="592021"/>
    <lineage>
        <taxon>Bacteria</taxon>
        <taxon>Bacillati</taxon>
        <taxon>Bacillota</taxon>
        <taxon>Bacilli</taxon>
        <taxon>Bacillales</taxon>
        <taxon>Bacillaceae</taxon>
        <taxon>Bacillus</taxon>
        <taxon>Bacillus cereus group</taxon>
    </lineage>
</organism>